<proteinExistence type="evidence at protein level"/>
<sequence>MTSPIPTPTKFDDKFGSISKSYKNFRPTYNDELYSIIDSHCDEKRDLAIDIGAGSGQATVRLAKYFKKVIGFEPSQGQIENAEKTDNVEYRLSAAEKIDLPSGSVDLITVAQAAHWFNLPVFYEESKRLLRENGSLIIWSYGLMKITNNNDAQVVHEKHYYETIGDQYWAPERKYIDDEYVDIKPSFENTTRKTISLPKSMSINDMIGYYSSWSGYAAFIKAGNKDVLPEIKETLLKAYKTTDGDSKLIDVNFPVYMILSKKE</sequence>
<keyword id="KW-0489">Methyltransferase</keyword>
<keyword id="KW-1185">Reference proteome</keyword>
<keyword id="KW-0949">S-adenosyl-L-methionine</keyword>
<keyword id="KW-0808">Transferase</keyword>
<evidence type="ECO:0000269" key="1">
    <source>
    </source>
</evidence>
<evidence type="ECO:0000269" key="2">
    <source>
    </source>
</evidence>
<evidence type="ECO:0000305" key="3"/>
<dbReference type="EC" id="2.1.1.-"/>
<dbReference type="EMBL" id="AAFI02000004">
    <property type="protein sequence ID" value="EAL73063.1"/>
    <property type="status" value="ALT_INIT"/>
    <property type="molecule type" value="Genomic_DNA"/>
</dbReference>
<dbReference type="RefSeq" id="XP_646891.1">
    <property type="nucleotide sequence ID" value="XM_641799.1"/>
</dbReference>
<dbReference type="SMR" id="Q55EX9"/>
<dbReference type="FunCoup" id="Q55EX9">
    <property type="interactions" value="61"/>
</dbReference>
<dbReference type="IntAct" id="Q55EX9">
    <property type="interactions" value="1"/>
</dbReference>
<dbReference type="STRING" id="44689.Q55EX9"/>
<dbReference type="GlyGen" id="Q55EX9">
    <property type="glycosylation" value="1 site"/>
</dbReference>
<dbReference type="PaxDb" id="44689-DDB0233914"/>
<dbReference type="EnsemblProtists" id="EAL73063">
    <property type="protein sequence ID" value="EAL73063"/>
    <property type="gene ID" value="DDB_G0268948"/>
</dbReference>
<dbReference type="GeneID" id="8616576"/>
<dbReference type="KEGG" id="ddi:DDB_G0268948"/>
<dbReference type="dictyBase" id="DDB_G0268948"/>
<dbReference type="VEuPathDB" id="AmoebaDB:DDB_G0268948"/>
<dbReference type="eggNOG" id="KOG3010">
    <property type="taxonomic scope" value="Eukaryota"/>
</dbReference>
<dbReference type="InParanoid" id="Q55EX9"/>
<dbReference type="PhylomeDB" id="Q55EX9"/>
<dbReference type="PRO" id="PR:Q55EX9"/>
<dbReference type="Proteomes" id="UP000002195">
    <property type="component" value="Chromosome 1"/>
</dbReference>
<dbReference type="GO" id="GO:0045335">
    <property type="term" value="C:phagocytic vesicle"/>
    <property type="evidence" value="ECO:0007005"/>
    <property type="project" value="dictyBase"/>
</dbReference>
<dbReference type="GO" id="GO:0008757">
    <property type="term" value="F:S-adenosylmethionine-dependent methyltransferase activity"/>
    <property type="evidence" value="ECO:0007669"/>
    <property type="project" value="InterPro"/>
</dbReference>
<dbReference type="GO" id="GO:0032259">
    <property type="term" value="P:methylation"/>
    <property type="evidence" value="ECO:0007669"/>
    <property type="project" value="UniProtKB-KW"/>
</dbReference>
<dbReference type="CDD" id="cd02440">
    <property type="entry name" value="AdoMet_MTases"/>
    <property type="match status" value="1"/>
</dbReference>
<dbReference type="FunFam" id="3.40.50.150:FF:000296">
    <property type="entry name" value="Putative methyltransferase DDB_G0268948"/>
    <property type="match status" value="1"/>
</dbReference>
<dbReference type="Gene3D" id="3.40.50.150">
    <property type="entry name" value="Vaccinia Virus protein VP39"/>
    <property type="match status" value="1"/>
</dbReference>
<dbReference type="InterPro" id="IPR051052">
    <property type="entry name" value="Diverse_substrate_MTase"/>
</dbReference>
<dbReference type="InterPro" id="IPR013216">
    <property type="entry name" value="Methyltransf_11"/>
</dbReference>
<dbReference type="InterPro" id="IPR029063">
    <property type="entry name" value="SAM-dependent_MTases_sf"/>
</dbReference>
<dbReference type="PANTHER" id="PTHR44942">
    <property type="entry name" value="METHYLTRANSF_11 DOMAIN-CONTAINING PROTEIN"/>
    <property type="match status" value="1"/>
</dbReference>
<dbReference type="PANTHER" id="PTHR44942:SF4">
    <property type="entry name" value="METHYLTRANSFERASE TYPE 11 DOMAIN-CONTAINING PROTEIN"/>
    <property type="match status" value="1"/>
</dbReference>
<dbReference type="Pfam" id="PF08241">
    <property type="entry name" value="Methyltransf_11"/>
    <property type="match status" value="1"/>
</dbReference>
<dbReference type="SUPFAM" id="SSF53335">
    <property type="entry name" value="S-adenosyl-L-methionine-dependent methyltransferases"/>
    <property type="match status" value="1"/>
</dbReference>
<gene>
    <name type="ORF">DDB_G0268948</name>
</gene>
<name>Y8948_DICDI</name>
<protein>
    <recommendedName>
        <fullName>Putative methyltransferase DDB_G0268948</fullName>
        <ecNumber>2.1.1.-</ecNumber>
    </recommendedName>
</protein>
<accession>Q55EX9</accession>
<organism>
    <name type="scientific">Dictyostelium discoideum</name>
    <name type="common">Social amoeba</name>
    <dbReference type="NCBI Taxonomy" id="44689"/>
    <lineage>
        <taxon>Eukaryota</taxon>
        <taxon>Amoebozoa</taxon>
        <taxon>Evosea</taxon>
        <taxon>Eumycetozoa</taxon>
        <taxon>Dictyostelia</taxon>
        <taxon>Dictyosteliales</taxon>
        <taxon>Dictyosteliaceae</taxon>
        <taxon>Dictyostelium</taxon>
    </lineage>
</organism>
<feature type="chain" id="PRO_0000393367" description="Putative methyltransferase DDB_G0268948">
    <location>
        <begin position="1"/>
        <end position="263"/>
    </location>
</feature>
<comment type="induction">
    <text evidence="1 2">Up-regulated by Pseudomonas aeruginosa, PAO1 strain and PA14 strain infection. Up-regulated in gcsA null cells devoid of glutathione.</text>
</comment>
<comment type="similarity">
    <text evidence="3">Belongs to the methyltransferase superfamily.</text>
</comment>
<comment type="sequence caution" evidence="3">
    <conflict type="erroneous initiation">
        <sequence resource="EMBL-CDS" id="EAL73063"/>
    </conflict>
    <text>Extended N-terminus.</text>
</comment>
<reference key="1">
    <citation type="journal article" date="2005" name="Nature">
        <title>The genome of the social amoeba Dictyostelium discoideum.</title>
        <authorList>
            <person name="Eichinger L."/>
            <person name="Pachebat J.A."/>
            <person name="Gloeckner G."/>
            <person name="Rajandream M.A."/>
            <person name="Sucgang R."/>
            <person name="Berriman M."/>
            <person name="Song J."/>
            <person name="Olsen R."/>
            <person name="Szafranski K."/>
            <person name="Xu Q."/>
            <person name="Tunggal B."/>
            <person name="Kummerfeld S."/>
            <person name="Madera M."/>
            <person name="Konfortov B.A."/>
            <person name="Rivero F."/>
            <person name="Bankier A.T."/>
            <person name="Lehmann R."/>
            <person name="Hamlin N."/>
            <person name="Davies R."/>
            <person name="Gaudet P."/>
            <person name="Fey P."/>
            <person name="Pilcher K."/>
            <person name="Chen G."/>
            <person name="Saunders D."/>
            <person name="Sodergren E.J."/>
            <person name="Davis P."/>
            <person name="Kerhornou A."/>
            <person name="Nie X."/>
            <person name="Hall N."/>
            <person name="Anjard C."/>
            <person name="Hemphill L."/>
            <person name="Bason N."/>
            <person name="Farbrother P."/>
            <person name="Desany B."/>
            <person name="Just E."/>
            <person name="Morio T."/>
            <person name="Rost R."/>
            <person name="Churcher C.M."/>
            <person name="Cooper J."/>
            <person name="Haydock S."/>
            <person name="van Driessche N."/>
            <person name="Cronin A."/>
            <person name="Goodhead I."/>
            <person name="Muzny D.M."/>
            <person name="Mourier T."/>
            <person name="Pain A."/>
            <person name="Lu M."/>
            <person name="Harper D."/>
            <person name="Lindsay R."/>
            <person name="Hauser H."/>
            <person name="James K.D."/>
            <person name="Quiles M."/>
            <person name="Madan Babu M."/>
            <person name="Saito T."/>
            <person name="Buchrieser C."/>
            <person name="Wardroper A."/>
            <person name="Felder M."/>
            <person name="Thangavelu M."/>
            <person name="Johnson D."/>
            <person name="Knights A."/>
            <person name="Loulseged H."/>
            <person name="Mungall K.L."/>
            <person name="Oliver K."/>
            <person name="Price C."/>
            <person name="Quail M.A."/>
            <person name="Urushihara H."/>
            <person name="Hernandez J."/>
            <person name="Rabbinowitsch E."/>
            <person name="Steffen D."/>
            <person name="Sanders M."/>
            <person name="Ma J."/>
            <person name="Kohara Y."/>
            <person name="Sharp S."/>
            <person name="Simmonds M.N."/>
            <person name="Spiegler S."/>
            <person name="Tivey A."/>
            <person name="Sugano S."/>
            <person name="White B."/>
            <person name="Walker D."/>
            <person name="Woodward J.R."/>
            <person name="Winckler T."/>
            <person name="Tanaka Y."/>
            <person name="Shaulsky G."/>
            <person name="Schleicher M."/>
            <person name="Weinstock G.M."/>
            <person name="Rosenthal A."/>
            <person name="Cox E.C."/>
            <person name="Chisholm R.L."/>
            <person name="Gibbs R.A."/>
            <person name="Loomis W.F."/>
            <person name="Platzer M."/>
            <person name="Kay R.R."/>
            <person name="Williams J.G."/>
            <person name="Dear P.H."/>
            <person name="Noegel A.A."/>
            <person name="Barrell B.G."/>
            <person name="Kuspa A."/>
        </authorList>
    </citation>
    <scope>NUCLEOTIDE SEQUENCE [LARGE SCALE GENOMIC DNA]</scope>
    <source>
        <strain>AX4</strain>
    </source>
</reference>
<reference key="2">
    <citation type="journal article" date="2006" name="J. Proteome Res.">
        <title>Identification of novel centrosomal proteins in Dictyostelium discoideum by comparative proteomic approaches.</title>
        <authorList>
            <person name="Reinders Y."/>
            <person name="Schulz I."/>
            <person name="Graef R."/>
            <person name="Sickmann A."/>
        </authorList>
    </citation>
    <scope>IDENTIFICATION [LARGE SCALE ANALYSIS]</scope>
    <scope>IDENTIFICATION BY MASS SPECTROMETRY</scope>
</reference>
<reference key="3">
    <citation type="journal article" date="2006" name="Mol. Cell. Proteomics">
        <title>Proteomics fingerprinting of phagosome maturation and evidence for the role of a Galpha during uptake.</title>
        <authorList>
            <person name="Gotthardt D."/>
            <person name="Blancheteau V."/>
            <person name="Bosserhoff A."/>
            <person name="Ruppert T."/>
            <person name="Delorenzi M."/>
            <person name="Soldati T."/>
        </authorList>
    </citation>
    <scope>IDENTIFICATION [LARGE SCALE ANALYSIS]</scope>
    <scope>IDENTIFICATION BY MASS SPECTROMETRY</scope>
    <source>
        <strain>AX2</strain>
    </source>
</reference>
<reference key="4">
    <citation type="journal article" date="2008" name="BMC Microbiol.">
        <title>Dictyostelium transcriptional responses to Pseudomonas aeruginosa: common and specific effects from PAO1 and PA14 strains.</title>
        <authorList>
            <person name="Carilla-Latorre S."/>
            <person name="Calvo-Garrido J."/>
            <person name="Bloomfield G."/>
            <person name="Skelton J."/>
            <person name="Kay R.R."/>
            <person name="Ivens A."/>
            <person name="Martinez J.L."/>
            <person name="Escalante R."/>
        </authorList>
    </citation>
    <scope>INDUCTION [LARGE SCALE ANALYSIS]</scope>
</reference>
<reference key="5">
    <citation type="journal article" date="2008" name="Mol. Microbiol.">
        <title>Methylglyoxal accumulation by glutathione depletion leads to cell cycle arrest in Dictyostelium.</title>
        <authorList>
            <person name="Choi C.H."/>
            <person name="Park S.J."/>
            <person name="Jeong S.Y."/>
            <person name="Yim H.S."/>
            <person name="Kang S.O."/>
        </authorList>
    </citation>
    <scope>INDUCTION</scope>
</reference>
<reference key="6">
    <citation type="journal article" date="2009" name="Int. J. Med. Microbiol.">
        <title>Proteomic analysis of Legionella-containing phagosomes isolated from Dictyostelium.</title>
        <authorList>
            <person name="Shevchuk O."/>
            <person name="Batzilla C."/>
            <person name="Haegele S."/>
            <person name="Kusch H."/>
            <person name="Engelmann S."/>
            <person name="Hecker M."/>
            <person name="Haas A."/>
            <person name="Heuner K."/>
            <person name="Gloeckner G."/>
            <person name="Steinert M."/>
        </authorList>
    </citation>
    <scope>IDENTIFICATION [LARGE SCALE ANALYSIS]</scope>
    <scope>IDENTIFICATION BY MASS SPECTROMETRY</scope>
</reference>